<proteinExistence type="evidence at protein level"/>
<sequence length="400" mass="44910">MTTKNLETKVTVTSSPIRGAGDGMETEEPPKSVEVTSGVQSRKHHSLQSPWKKAVPSESPGVLQLGKMLTEKAMEVKAVRILVPKAAITHDIPNKNTKVKSLGHHKGEFLGQSEGVIEPNKELSEVKNVLEKLKNSERRLLQDKEGLSNQLRVQTEVNRELKKLLVASVGDDLQYHFERLAREKNQLILENEALGRNTAQLSEQLERMSIQCDVWRSKFLASRVMADELTNSRAALQRQNRDAHGAIQDLLSEREQFRQEMIATQKLLEELLVSLQWGREQTYSPSVQPHSTAELALTNHKLAKAVNSHLLGNVGINNQKKIPSTVEFCSTPAEKMAETVLRILDPVTCKESSPDNPFFESSPTTLLATKKNIGRFHPYTRYENITFNCCNHCRGELIAL</sequence>
<evidence type="ECO:0000255" key="1"/>
<evidence type="ECO:0000256" key="2">
    <source>
        <dbReference type="SAM" id="MobiDB-lite"/>
    </source>
</evidence>
<evidence type="ECO:0000269" key="3">
    <source>
    </source>
</evidence>
<evidence type="ECO:0000269" key="4">
    <source>
    </source>
</evidence>
<evidence type="ECO:0000269" key="5">
    <source>
    </source>
</evidence>
<evidence type="ECO:0000269" key="6">
    <source>
    </source>
</evidence>
<evidence type="ECO:0000303" key="7">
    <source>
    </source>
</evidence>
<evidence type="ECO:0000303" key="8">
    <source>
    </source>
</evidence>
<evidence type="ECO:0000305" key="9"/>
<evidence type="ECO:0000305" key="10">
    <source>
    </source>
</evidence>
<evidence type="ECO:0000305" key="11">
    <source>
    </source>
</evidence>
<evidence type="ECO:0000305" key="12">
    <source>
    </source>
</evidence>
<evidence type="ECO:0007744" key="13">
    <source>
    </source>
</evidence>
<evidence type="ECO:0007744" key="14">
    <source>
    </source>
</evidence>
<evidence type="ECO:0007744" key="15">
    <source>
    </source>
</evidence>
<protein>
    <recommendedName>
        <fullName>Golgin-45</fullName>
    </recommendedName>
    <alternativeName>
        <fullName>Basic leucine zipper nuclear factor 1</fullName>
    </alternativeName>
    <alternativeName>
        <fullName evidence="7 8">JEM-1</fullName>
    </alternativeName>
    <alternativeName>
        <fullName>p45 basic leucine-zipper nuclear factor</fullName>
    </alternativeName>
</protein>
<dbReference type="EMBL" id="U79751">
    <property type="protein sequence ID" value="AAB63110.1"/>
    <property type="molecule type" value="mRNA"/>
</dbReference>
<dbReference type="EMBL" id="AF288161">
    <property type="protein sequence ID" value="AAG37835.1"/>
    <property type="molecule type" value="mRNA"/>
</dbReference>
<dbReference type="EMBL" id="AF273875">
    <property type="protein sequence ID" value="AAG37821.1"/>
    <property type="molecule type" value="Genomic_DNA"/>
</dbReference>
<dbReference type="EMBL" id="AF288162">
    <property type="protein sequence ID" value="AAG37821.1"/>
    <property type="status" value="JOINED"/>
    <property type="molecule type" value="Genomic_DNA"/>
</dbReference>
<dbReference type="EMBL" id="AF272386">
    <property type="protein sequence ID" value="AAG37822.1"/>
    <property type="molecule type" value="Genomic_DNA"/>
</dbReference>
<dbReference type="EMBL" id="AF272387">
    <property type="protein sequence ID" value="AAG37822.1"/>
    <property type="status" value="JOINED"/>
    <property type="molecule type" value="Genomic_DNA"/>
</dbReference>
<dbReference type="EMBL" id="AF272388">
    <property type="protein sequence ID" value="AAG37822.1"/>
    <property type="status" value="JOINED"/>
    <property type="molecule type" value="Genomic_DNA"/>
</dbReference>
<dbReference type="EMBL" id="AF273875">
    <property type="protein sequence ID" value="AAG37822.1"/>
    <property type="status" value="JOINED"/>
    <property type="molecule type" value="Genomic_DNA"/>
</dbReference>
<dbReference type="EMBL" id="AF288162">
    <property type="protein sequence ID" value="AAG37822.1"/>
    <property type="status" value="JOINED"/>
    <property type="molecule type" value="Genomic_DNA"/>
</dbReference>
<dbReference type="EMBL" id="AL356852">
    <property type="status" value="NOT_ANNOTATED_CDS"/>
    <property type="molecule type" value="Genomic_DNA"/>
</dbReference>
<dbReference type="EMBL" id="CH471067">
    <property type="protein sequence ID" value="EAW90837.1"/>
    <property type="molecule type" value="Genomic_DNA"/>
</dbReference>
<dbReference type="EMBL" id="BC020716">
    <property type="protein sequence ID" value="AAH20716.1"/>
    <property type="molecule type" value="mRNA"/>
</dbReference>
<dbReference type="CCDS" id="CCDS1278.1">
    <molecule id="Q9H2G9-1"/>
</dbReference>
<dbReference type="CCDS" id="CCDS81397.1">
    <molecule id="Q9H2G9-2"/>
</dbReference>
<dbReference type="RefSeq" id="NP_001307901.1">
    <molecule id="Q9H2G9-2"/>
    <property type="nucleotide sequence ID" value="NM_001320972.2"/>
</dbReference>
<dbReference type="RefSeq" id="NP_001307902.1">
    <molecule id="Q9H2G9-1"/>
    <property type="nucleotide sequence ID" value="NM_001320973.2"/>
</dbReference>
<dbReference type="RefSeq" id="NP_003657.1">
    <molecule id="Q9H2G9-1"/>
    <property type="nucleotide sequence ID" value="NM_003666.4"/>
</dbReference>
<dbReference type="RefSeq" id="XP_011508394.1">
    <property type="nucleotide sequence ID" value="XM_011510092.2"/>
</dbReference>
<dbReference type="SMR" id="Q9H2G9"/>
<dbReference type="BioGRID" id="114118">
    <property type="interactions" value="135"/>
</dbReference>
<dbReference type="ComplexPortal" id="CPX-6092">
    <property type="entry name" value="GRASP55-GM45 Golgi stacking complex"/>
</dbReference>
<dbReference type="FunCoup" id="Q9H2G9">
    <property type="interactions" value="3805"/>
</dbReference>
<dbReference type="IntAct" id="Q9H2G9">
    <property type="interactions" value="147"/>
</dbReference>
<dbReference type="MINT" id="Q9H2G9"/>
<dbReference type="STRING" id="9606.ENSP00000356782"/>
<dbReference type="iPTMnet" id="Q9H2G9"/>
<dbReference type="PhosphoSitePlus" id="Q9H2G9"/>
<dbReference type="BioMuta" id="BLZF1"/>
<dbReference type="DMDM" id="116242501"/>
<dbReference type="jPOST" id="Q9H2G9"/>
<dbReference type="MassIVE" id="Q9H2G9"/>
<dbReference type="PaxDb" id="9606-ENSP00000356782"/>
<dbReference type="PeptideAtlas" id="Q9H2G9"/>
<dbReference type="ProteomicsDB" id="80547">
    <molecule id="Q9H2G9-1"/>
</dbReference>
<dbReference type="ProteomicsDB" id="80548">
    <molecule id="Q9H2G9-2"/>
</dbReference>
<dbReference type="Pumba" id="Q9H2G9"/>
<dbReference type="Antibodypedia" id="20542">
    <property type="antibodies" value="312 antibodies from 29 providers"/>
</dbReference>
<dbReference type="DNASU" id="8548"/>
<dbReference type="Ensembl" id="ENST00000329281.6">
    <molecule id="Q9H2G9-1"/>
    <property type="protein sequence ID" value="ENSP00000327541.2"/>
    <property type="gene ID" value="ENSG00000117475.14"/>
</dbReference>
<dbReference type="Ensembl" id="ENST00000367807.7">
    <molecule id="Q9H2G9-2"/>
    <property type="protein sequence ID" value="ENSP00000356781.3"/>
    <property type="gene ID" value="ENSG00000117475.14"/>
</dbReference>
<dbReference type="Ensembl" id="ENST00000367808.8">
    <molecule id="Q9H2G9-1"/>
    <property type="protein sequence ID" value="ENSP00000356782.3"/>
    <property type="gene ID" value="ENSG00000117475.14"/>
</dbReference>
<dbReference type="GeneID" id="8548"/>
<dbReference type="KEGG" id="hsa:8548"/>
<dbReference type="MANE-Select" id="ENST00000367808.8">
    <property type="protein sequence ID" value="ENSP00000356782.3"/>
    <property type="RefSeq nucleotide sequence ID" value="NM_001320973.2"/>
    <property type="RefSeq protein sequence ID" value="NP_001307902.1"/>
</dbReference>
<dbReference type="UCSC" id="uc001gfw.4">
    <molecule id="Q9H2G9-1"/>
    <property type="organism name" value="human"/>
</dbReference>
<dbReference type="AGR" id="HGNC:1065"/>
<dbReference type="CTD" id="8548"/>
<dbReference type="DisGeNET" id="8548"/>
<dbReference type="GeneCards" id="BLZF1"/>
<dbReference type="HGNC" id="HGNC:1065">
    <property type="gene designation" value="BLZF1"/>
</dbReference>
<dbReference type="HPA" id="ENSG00000117475">
    <property type="expression patterns" value="Low tissue specificity"/>
</dbReference>
<dbReference type="MIM" id="608692">
    <property type="type" value="gene"/>
</dbReference>
<dbReference type="neXtProt" id="NX_Q9H2G9"/>
<dbReference type="OpenTargets" id="ENSG00000117475"/>
<dbReference type="PharmGKB" id="PA25375"/>
<dbReference type="VEuPathDB" id="HostDB:ENSG00000117475"/>
<dbReference type="eggNOG" id="KOG4074">
    <property type="taxonomic scope" value="Eukaryota"/>
</dbReference>
<dbReference type="GeneTree" id="ENSGT00390000009400"/>
<dbReference type="HOGENOM" id="CLU_131589_0_0_1"/>
<dbReference type="InParanoid" id="Q9H2G9"/>
<dbReference type="OMA" id="MIDTHKL"/>
<dbReference type="OrthoDB" id="5959043at2759"/>
<dbReference type="PAN-GO" id="Q9H2G9">
    <property type="GO annotations" value="3 GO annotations based on evolutionary models"/>
</dbReference>
<dbReference type="PhylomeDB" id="Q9H2G9"/>
<dbReference type="TreeFam" id="TF317238"/>
<dbReference type="PathwayCommons" id="Q9H2G9"/>
<dbReference type="Reactome" id="R-HSA-162658">
    <property type="pathway name" value="Golgi Cisternae Pericentriolar Stack Reorganization"/>
</dbReference>
<dbReference type="SignaLink" id="Q9H2G9"/>
<dbReference type="SIGNOR" id="Q9H2G9"/>
<dbReference type="BioGRID-ORCS" id="8548">
    <property type="hits" value="6 hits in 1160 CRISPR screens"/>
</dbReference>
<dbReference type="ChiTaRS" id="BLZF1">
    <property type="organism name" value="human"/>
</dbReference>
<dbReference type="GeneWiki" id="BLZF1"/>
<dbReference type="GenomeRNAi" id="8548"/>
<dbReference type="Pharos" id="Q9H2G9">
    <property type="development level" value="Tbio"/>
</dbReference>
<dbReference type="PRO" id="PR:Q9H2G9"/>
<dbReference type="Proteomes" id="UP000005640">
    <property type="component" value="Chromosome 1"/>
</dbReference>
<dbReference type="RNAct" id="Q9H2G9">
    <property type="molecule type" value="protein"/>
</dbReference>
<dbReference type="Bgee" id="ENSG00000117475">
    <property type="expression patterns" value="Expressed in calcaneal tendon and 191 other cell types or tissues"/>
</dbReference>
<dbReference type="ExpressionAtlas" id="Q9H2G9">
    <property type="expression patterns" value="baseline and differential"/>
</dbReference>
<dbReference type="GO" id="GO:0005801">
    <property type="term" value="C:cis-Golgi network"/>
    <property type="evidence" value="ECO:0000303"/>
    <property type="project" value="ComplexPortal"/>
</dbReference>
<dbReference type="GO" id="GO:0005737">
    <property type="term" value="C:cytoplasm"/>
    <property type="evidence" value="ECO:0000303"/>
    <property type="project" value="UniProtKB"/>
</dbReference>
<dbReference type="GO" id="GO:0005794">
    <property type="term" value="C:Golgi apparatus"/>
    <property type="evidence" value="ECO:0000314"/>
    <property type="project" value="HPA"/>
</dbReference>
<dbReference type="GO" id="GO:0000139">
    <property type="term" value="C:Golgi membrane"/>
    <property type="evidence" value="ECO:0000318"/>
    <property type="project" value="GO_Central"/>
</dbReference>
<dbReference type="GO" id="GO:0005654">
    <property type="term" value="C:nucleoplasm"/>
    <property type="evidence" value="ECO:0000314"/>
    <property type="project" value="HPA"/>
</dbReference>
<dbReference type="GO" id="GO:0005634">
    <property type="term" value="C:nucleus"/>
    <property type="evidence" value="ECO:0000314"/>
    <property type="project" value="GO_Central"/>
</dbReference>
<dbReference type="GO" id="GO:0019899">
    <property type="term" value="F:enzyme binding"/>
    <property type="evidence" value="ECO:0000353"/>
    <property type="project" value="UniProtKB"/>
</dbReference>
<dbReference type="GO" id="GO:0031625">
    <property type="term" value="F:ubiquitin protein ligase binding"/>
    <property type="evidence" value="ECO:0000353"/>
    <property type="project" value="UniProtKB"/>
</dbReference>
<dbReference type="GO" id="GO:0007030">
    <property type="term" value="P:Golgi organization"/>
    <property type="evidence" value="ECO:0000314"/>
    <property type="project" value="MGI"/>
</dbReference>
<dbReference type="GO" id="GO:0043001">
    <property type="term" value="P:Golgi to plasma membrane protein transport"/>
    <property type="evidence" value="ECO:0000314"/>
    <property type="project" value="MGI"/>
</dbReference>
<dbReference type="InterPro" id="IPR027095">
    <property type="entry name" value="Golgin-45"/>
</dbReference>
<dbReference type="InterPro" id="IPR013183">
    <property type="entry name" value="Hsk3-like"/>
</dbReference>
<dbReference type="PANTHER" id="PTHR13066">
    <property type="entry name" value="BASIC LEUCINE ZIPPER NUCLEAR FACTOR 1 BLZF1 PROTEIN"/>
    <property type="match status" value="1"/>
</dbReference>
<dbReference type="PANTHER" id="PTHR13066:SF2">
    <property type="entry name" value="GOLGIN-45"/>
    <property type="match status" value="1"/>
</dbReference>
<dbReference type="Pfam" id="PF08227">
    <property type="entry name" value="DASH_Hsk3"/>
    <property type="match status" value="1"/>
</dbReference>
<gene>
    <name type="primary">BLZF1</name>
    <name type="synonym">JEM1</name>
</gene>
<feature type="chain" id="PRO_0000087539" description="Golgin-45">
    <location>
        <begin position="1"/>
        <end position="400"/>
    </location>
</feature>
<feature type="region of interest" description="Disordered" evidence="2">
    <location>
        <begin position="1"/>
        <end position="58"/>
    </location>
</feature>
<feature type="region of interest" description="Essential for interaction with GORASP2" evidence="4">
    <location>
        <begin position="394"/>
        <end position="400"/>
    </location>
</feature>
<feature type="coiled-coil region" evidence="1">
    <location>
        <begin position="120"/>
        <end position="213"/>
    </location>
</feature>
<feature type="short sequence motif" description="Tankyrase-binding motif">
    <location>
        <begin position="18"/>
        <end position="22"/>
    </location>
</feature>
<feature type="compositionally biased region" description="Polar residues" evidence="2">
    <location>
        <begin position="1"/>
        <end position="16"/>
    </location>
</feature>
<feature type="modified residue" description="Phosphoserine" evidence="15">
    <location>
        <position position="15"/>
    </location>
</feature>
<feature type="modified residue" description="Phosphoserine" evidence="14">
    <location>
        <position position="49"/>
    </location>
</feature>
<feature type="modified residue" description="Phosphothreonine" evidence="13">
    <location>
        <position position="348"/>
    </location>
</feature>
<feature type="modified residue" description="Phosphoserine" evidence="13">
    <location>
        <position position="353"/>
    </location>
</feature>
<feature type="splice variant" id="VSP_011186" description="In isoform 2." evidence="7">
    <original>NRELKKLLVASVGDDLQ</original>
    <variation>RRALIDKMSTTLYVWTF</variation>
    <location>
        <begin position="158"/>
        <end position="174"/>
    </location>
</feature>
<feature type="splice variant" id="VSP_011187" description="In isoform 2." evidence="7">
    <location>
        <begin position="175"/>
        <end position="400"/>
    </location>
</feature>
<feature type="sequence variant" id="VAR_028142" description="In dbSNP:rs1028180.">
    <original>Q</original>
    <variation>R</variation>
    <location>
        <position position="40"/>
    </location>
</feature>
<feature type="sequence variant" id="VAR_028143" description="In dbSNP:rs1064274.">
    <original>R</original>
    <variation>Q</variation>
    <location>
        <position position="196"/>
    </location>
</feature>
<feature type="sequence conflict" description="In Ref. 2; AAG37822." evidence="9" ref="2">
    <original>A</original>
    <variation>V</variation>
    <location>
        <position position="368"/>
    </location>
</feature>
<comment type="function">
    <text evidence="4">Required for normal Golgi structure and for protein transport from the endoplasmic reticulum (ER) through the Golgi apparatus to the cell surface.</text>
</comment>
<comment type="subunit">
    <text evidence="4">Interacts with GORASP2. Interacts with the GTP-bound form of RAB2, but not with other Golgi Rab proteins (PubMed:11739401). Identified in a complex with RAB2 and GORASP2 (PubMed:11739401).</text>
</comment>
<comment type="interaction">
    <interactant intactId="EBI-2548012">
        <id>Q9H2G9</id>
    </interactant>
    <interactant intactId="EBI-9641546">
        <id>Q99996-2</id>
        <label>AKAP9</label>
    </interactant>
    <organismsDiffer>false</organismsDiffer>
    <experiments>3</experiments>
</comment>
<comment type="interaction">
    <interactant intactId="EBI-2548012">
        <id>Q9H2G9</id>
    </interactant>
    <interactant intactId="EBI-10187270">
        <id>Q9Y2J4-4</id>
        <label>AMOTL2</label>
    </interactant>
    <organismsDiffer>false</organismsDiffer>
    <experiments>3</experiments>
</comment>
<comment type="interaction">
    <interactant intactId="EBI-2548012">
        <id>Q9H2G9</id>
    </interactant>
    <interactant intactId="EBI-11954519">
        <id>Q49AR9</id>
        <label>ANKS1A</label>
    </interactant>
    <organismsDiffer>false</organismsDiffer>
    <experiments>3</experiments>
</comment>
<comment type="interaction">
    <interactant intactId="EBI-2548012">
        <id>Q9H2G9</id>
    </interactant>
    <interactant intactId="EBI-745213">
        <id>P29972</id>
        <label>AQP1</label>
    </interactant>
    <organismsDiffer>false</organismsDiffer>
    <experiments>3</experiments>
</comment>
<comment type="interaction">
    <interactant intactId="EBI-2548012">
        <id>Q9H2G9</id>
    </interactant>
    <interactant intactId="EBI-747185">
        <id>O95817</id>
        <label>BAG3</label>
    </interactant>
    <organismsDiffer>false</organismsDiffer>
    <experiments>3</experiments>
</comment>
<comment type="interaction">
    <interactant intactId="EBI-2548012">
        <id>Q9H2G9</id>
    </interactant>
    <interactant intactId="EBI-2949658">
        <id>O95429</id>
        <label>BAG4</label>
    </interactant>
    <organismsDiffer>false</organismsDiffer>
    <experiments>3</experiments>
</comment>
<comment type="interaction">
    <interactant intactId="EBI-2548012">
        <id>Q9H2G9</id>
    </interactant>
    <interactant intactId="EBI-11524452">
        <id>Q8N9N5-2</id>
        <label>BANP</label>
    </interactant>
    <organismsDiffer>false</organismsDiffer>
    <experiments>3</experiments>
</comment>
<comment type="interaction">
    <interactant intactId="EBI-2548012">
        <id>Q9H2G9</id>
    </interactant>
    <interactant intactId="EBI-765407">
        <id>P41182</id>
        <label>BCL6</label>
    </interactant>
    <organismsDiffer>false</organismsDiffer>
    <experiments>4</experiments>
</comment>
<comment type="interaction">
    <interactant intactId="EBI-2548012">
        <id>Q9H2G9</id>
    </interactant>
    <interactant intactId="EBI-745073">
        <id>Q9BXY8</id>
        <label>BEX2</label>
    </interactant>
    <organismsDiffer>false</organismsDiffer>
    <experiments>6</experiments>
</comment>
<comment type="interaction">
    <interactant intactId="EBI-2548012">
        <id>Q9H2G9</id>
    </interactant>
    <interactant intactId="EBI-751319">
        <id>Q9H257</id>
        <label>CARD9</label>
    </interactant>
    <organismsDiffer>false</organismsDiffer>
    <experiments>3</experiments>
</comment>
<comment type="interaction">
    <interactant intactId="EBI-2548012">
        <id>Q9H2G9</id>
    </interactant>
    <interactant intactId="EBI-744556">
        <id>Q96HB5</id>
        <label>CCDC120</label>
    </interactant>
    <organismsDiffer>false</organismsDiffer>
    <experiments>5</experiments>
</comment>
<comment type="interaction">
    <interactant intactId="EBI-2548012">
        <id>Q9H2G9</id>
    </interactant>
    <interactant intactId="EBI-741406">
        <id>P51946</id>
        <label>CCNH</label>
    </interactant>
    <organismsDiffer>false</organismsDiffer>
    <experiments>3</experiments>
</comment>
<comment type="interaction">
    <interactant intactId="EBI-2548012">
        <id>Q9H2G9</id>
    </interactant>
    <interactant intactId="EBI-11983537">
        <id>Q86Y33-5</id>
        <label>CDC20B</label>
    </interactant>
    <organismsDiffer>false</organismsDiffer>
    <experiments>5</experiments>
</comment>
<comment type="interaction">
    <interactant intactId="EBI-2548012">
        <id>Q9H2G9</id>
    </interactant>
    <interactant intactId="EBI-295634">
        <id>Q16543</id>
        <label>CDC37</label>
    </interactant>
    <organismsDiffer>false</organismsDiffer>
    <experiments>3</experiments>
</comment>
<comment type="interaction">
    <interactant intactId="EBI-2548012">
        <id>Q9H2G9</id>
    </interactant>
    <interactant intactId="EBI-746238">
        <id>Q07002</id>
        <label>CDK18</label>
    </interactant>
    <organismsDiffer>false</organismsDiffer>
    <experiments>3</experiments>
</comment>
<comment type="interaction">
    <interactant intactId="EBI-2548012">
        <id>Q9H2G9</id>
    </interactant>
    <interactant intactId="EBI-749051">
        <id>Q8IYR0</id>
        <label>CFAP206</label>
    </interactant>
    <organismsDiffer>false</organismsDiffer>
    <experiments>3</experiments>
</comment>
<comment type="interaction">
    <interactant intactId="EBI-2548012">
        <id>Q9H2G9</id>
    </interactant>
    <interactant intactId="EBI-743375">
        <id>Q9NX63</id>
        <label>CHCHD3</label>
    </interactant>
    <organismsDiffer>false</organismsDiffer>
    <experiments>6</experiments>
</comment>
<comment type="interaction">
    <interactant intactId="EBI-2548012">
        <id>Q9H2G9</id>
    </interactant>
    <interactant intactId="EBI-739784">
        <id>Q9BW66</id>
        <label>CINP</label>
    </interactant>
    <organismsDiffer>false</organismsDiffer>
    <experiments>7</experiments>
</comment>
<comment type="interaction">
    <interactant intactId="EBI-2548012">
        <id>Q9H2G9</id>
    </interactant>
    <interactant intactId="EBI-11980535">
        <id>P51800-3</id>
        <label>CLCNKA</label>
    </interactant>
    <organismsDiffer>false</organismsDiffer>
    <experiments>3</experiments>
</comment>
<comment type="interaction">
    <interactant intactId="EBI-2548012">
        <id>Q9H2G9</id>
    </interactant>
    <interactant intactId="EBI-11962928">
        <id>Q9UI47-2</id>
        <label>CTNNA3</label>
    </interactant>
    <organismsDiffer>false</organismsDiffer>
    <experiments>3</experiments>
</comment>
<comment type="interaction">
    <interactant intactId="EBI-2548012">
        <id>Q9H2G9</id>
    </interactant>
    <interactant intactId="EBI-744099">
        <id>Q9H0I2</id>
        <label>ENKD1</label>
    </interactant>
    <organismsDiffer>false</organismsDiffer>
    <experiments>5</experiments>
</comment>
<comment type="interaction">
    <interactant intactId="EBI-2548012">
        <id>Q9H2G9</id>
    </interactant>
    <interactant intactId="EBI-10182490">
        <id>O15197-2</id>
        <label>EPHB6</label>
    </interactant>
    <organismsDiffer>false</organismsDiffer>
    <experiments>3</experiments>
</comment>
<comment type="interaction">
    <interactant intactId="EBI-2548012">
        <id>Q9H2G9</id>
    </interactant>
    <interactant intactId="EBI-1183307">
        <id>P19447</id>
        <label>ERCC3</label>
    </interactant>
    <organismsDiffer>false</organismsDiffer>
    <experiments>3</experiments>
</comment>
<comment type="interaction">
    <interactant intactId="EBI-2548012">
        <id>Q9H2G9</id>
    </interactant>
    <interactant intactId="EBI-742102">
        <id>Q8IYI6</id>
        <label>EXOC8</label>
    </interactant>
    <organismsDiffer>false</organismsDiffer>
    <experiments>3</experiments>
</comment>
<comment type="interaction">
    <interactant intactId="EBI-2548012">
        <id>Q9H2G9</id>
    </interactant>
    <interactant intactId="EBI-11986315">
        <id>Q9H5Z6-2</id>
        <label>FAM124B</label>
    </interactant>
    <organismsDiffer>false</organismsDiffer>
    <experiments>3</experiments>
</comment>
<comment type="interaction">
    <interactant intactId="EBI-2548012">
        <id>Q9H2G9</id>
    </interactant>
    <interactant intactId="EBI-6658203">
        <id>Q86YD7</id>
        <label>FAM90A1</label>
    </interactant>
    <organismsDiffer>false</organismsDiffer>
    <experiments>3</experiments>
</comment>
<comment type="interaction">
    <interactant intactId="EBI-2548012">
        <id>Q9H2G9</id>
    </interactant>
    <interactant intactId="EBI-10244131">
        <id>Q8TES7-6</id>
        <label>FBF1</label>
    </interactant>
    <organismsDiffer>false</organismsDiffer>
    <experiments>3</experiments>
</comment>
<comment type="interaction">
    <interactant intactId="EBI-2548012">
        <id>Q9H2G9</id>
    </interactant>
    <interactant intactId="EBI-348399">
        <id>P22607</id>
        <label>FGFR3</label>
    </interactant>
    <organismsDiffer>false</organismsDiffer>
    <experiments>3</experiments>
</comment>
<comment type="interaction">
    <interactant intactId="EBI-2548012">
        <id>Q9H2G9</id>
    </interactant>
    <interactant intactId="EBI-701903">
        <id>Q14192</id>
        <label>FHL2</label>
    </interactant>
    <organismsDiffer>false</organismsDiffer>
    <experiments>10</experiments>
</comment>
<comment type="interaction">
    <interactant intactId="EBI-2548012">
        <id>Q9H2G9</id>
    </interactant>
    <interactant intactId="EBI-741729">
        <id>Q96NE9</id>
        <label>FRMD6</label>
    </interactant>
    <organismsDiffer>false</organismsDiffer>
    <experiments>3</experiments>
</comment>
<comment type="interaction">
    <interactant intactId="EBI-2548012">
        <id>Q9H2G9</id>
    </interactant>
    <interactant intactId="EBI-725515">
        <id>O43559</id>
        <label>FRS3</label>
    </interactant>
    <organismsDiffer>false</organismsDiffer>
    <experiments>3</experiments>
</comment>
<comment type="interaction">
    <interactant intactId="EBI-2548012">
        <id>Q9H2G9</id>
    </interactant>
    <interactant intactId="EBI-744104">
        <id>P55040</id>
        <label>GEM</label>
    </interactant>
    <organismsDiffer>false</organismsDiffer>
    <experiments>6</experiments>
</comment>
<comment type="interaction">
    <interactant intactId="EBI-2548012">
        <id>Q9H2G9</id>
    </interactant>
    <interactant intactId="EBI-739467">
        <id>Q9H8Y8</id>
        <label>GORASP2</label>
    </interactant>
    <organismsDiffer>false</organismsDiffer>
    <experiments>4</experiments>
</comment>
<comment type="interaction">
    <interactant intactId="EBI-2548012">
        <id>Q9H2G9</id>
    </interactant>
    <interactant intactId="EBI-8285963">
        <id>Q14957</id>
        <label>GRIN2C</label>
    </interactant>
    <organismsDiffer>false</organismsDiffer>
    <experiments>3</experiments>
</comment>
<comment type="interaction">
    <interactant intactId="EBI-2548012">
        <id>Q9H2G9</id>
    </interactant>
    <interactant intactId="EBI-351506">
        <id>P06396</id>
        <label>GSN</label>
    </interactant>
    <organismsDiffer>false</organismsDiffer>
    <experiments>3</experiments>
</comment>
<comment type="interaction">
    <interactant intactId="EBI-2548012">
        <id>Q9H2G9</id>
    </interactant>
    <interactant intactId="EBI-11953488">
        <id>P56524-2</id>
        <label>HDAC4</label>
    </interactant>
    <organismsDiffer>false</organismsDiffer>
    <experiments>3</experiments>
</comment>
<comment type="interaction">
    <interactant intactId="EBI-2548012">
        <id>Q9H2G9</id>
    </interactant>
    <interactant intactId="EBI-740785">
        <id>P49639</id>
        <label>HOXA1</label>
    </interactant>
    <organismsDiffer>false</organismsDiffer>
    <experiments>6</experiments>
</comment>
<comment type="interaction">
    <interactant intactId="EBI-2548012">
        <id>Q9H2G9</id>
    </interactant>
    <interactant intactId="EBI-1752118">
        <id>P31273</id>
        <label>HOXC8</label>
    </interactant>
    <organismsDiffer>false</organismsDiffer>
    <experiments>3</experiments>
</comment>
<comment type="interaction">
    <interactant intactId="EBI-2548012">
        <id>Q9H2G9</id>
    </interactant>
    <interactant intactId="EBI-350145">
        <id>P01112</id>
        <label>HRAS</label>
    </interactant>
    <organismsDiffer>false</organismsDiffer>
    <experiments>4</experiments>
</comment>
<comment type="interaction">
    <interactant intactId="EBI-2548012">
        <id>Q9H2G9</id>
    </interactant>
    <interactant intactId="EBI-11955401">
        <id>Q86VF2-5</id>
        <label>IGFN1</label>
    </interactant>
    <organismsDiffer>false</organismsDiffer>
    <experiments>3</experiments>
</comment>
<comment type="interaction">
    <interactant intactId="EBI-2548012">
        <id>Q9H2G9</id>
    </interactant>
    <interactant intactId="EBI-747204">
        <id>Q9UKT9</id>
        <label>IKZF3</label>
    </interactant>
    <organismsDiffer>false</organismsDiffer>
    <experiments>3</experiments>
</comment>
<comment type="interaction">
    <interactant intactId="EBI-2548012">
        <id>Q9H2G9</id>
    </interactant>
    <interactant intactId="EBI-17178971">
        <id>Q14005-2</id>
        <label>IL16</label>
    </interactant>
    <organismsDiffer>false</organismsDiffer>
    <experiments>3</experiments>
</comment>
<comment type="interaction">
    <interactant intactId="EBI-2548012">
        <id>Q9H2G9</id>
    </interactant>
    <interactant intactId="EBI-715611">
        <id>Q9C086</id>
        <label>INO80B</label>
    </interactant>
    <organismsDiffer>false</organismsDiffer>
    <experiments>3</experiments>
</comment>
<comment type="interaction">
    <interactant intactId="EBI-2548012">
        <id>Q9H2G9</id>
    </interactant>
    <interactant intactId="EBI-10220600">
        <id>Q8NA54</id>
        <label>IQUB</label>
    </interactant>
    <organismsDiffer>false</organismsDiffer>
    <experiments>6</experiments>
</comment>
<comment type="interaction">
    <interactant intactId="EBI-2548012">
        <id>Q9H2G9</id>
    </interactant>
    <interactant intactId="EBI-2556193">
        <id>Q63ZY3</id>
        <label>KANK2</label>
    </interactant>
    <organismsDiffer>false</organismsDiffer>
    <experiments>3</experiments>
</comment>
<comment type="interaction">
    <interactant intactId="EBI-2548012">
        <id>Q9H2G9</id>
    </interactant>
    <interactant intactId="EBI-399080">
        <id>Q92993</id>
        <label>KAT5</label>
    </interactant>
    <organismsDiffer>false</organismsDiffer>
    <experiments>3</experiments>
</comment>
<comment type="interaction">
    <interactant intactId="EBI-2548012">
        <id>Q9H2G9</id>
    </interactant>
    <interactant intactId="EBI-4397613">
        <id>Q7L273</id>
        <label>KCTD9</label>
    </interactant>
    <organismsDiffer>false</organismsDiffer>
    <experiments>3</experiments>
</comment>
<comment type="interaction">
    <interactant intactId="EBI-2548012">
        <id>Q9H2G9</id>
    </interactant>
    <interactant intactId="EBI-8472129">
        <id>Q9HAQ2</id>
        <label>KIF9</label>
    </interactant>
    <organismsDiffer>false</organismsDiffer>
    <experiments>3</experiments>
</comment>
<comment type="interaction">
    <interactant intactId="EBI-2548012">
        <id>Q9H2G9</id>
    </interactant>
    <interactant intactId="EBI-6426443">
        <id>Q2WGJ6</id>
        <label>KLHL38</label>
    </interactant>
    <organismsDiffer>false</organismsDiffer>
    <experiments>8</experiments>
</comment>
<comment type="interaction">
    <interactant intactId="EBI-2548012">
        <id>Q9H2G9</id>
    </interactant>
    <interactant intactId="EBI-10274069">
        <id>Q8TCE9</id>
        <label>LGALS14</label>
    </interactant>
    <organismsDiffer>false</organismsDiffer>
    <experiments>3</experiments>
</comment>
<comment type="interaction">
    <interactant intactId="EBI-2548012">
        <id>Q9H2G9</id>
    </interactant>
    <interactant intactId="EBI-8639312">
        <id>P25800</id>
        <label>LMO1</label>
    </interactant>
    <organismsDiffer>false</organismsDiffer>
    <experiments>7</experiments>
</comment>
<comment type="interaction">
    <interactant intactId="EBI-2548012">
        <id>Q9H2G9</id>
    </interactant>
    <interactant intactId="EBI-739696">
        <id>P25791</id>
        <label>LMO2</label>
    </interactant>
    <organismsDiffer>false</organismsDiffer>
    <experiments>3</experiments>
</comment>
<comment type="interaction">
    <interactant intactId="EBI-2548012">
        <id>Q9H2G9</id>
    </interactant>
    <interactant intactId="EBI-11742507">
        <id>Q8TAP4-4</id>
        <label>LMO3</label>
    </interactant>
    <organismsDiffer>false</organismsDiffer>
    <experiments>3</experiments>
</comment>
<comment type="interaction">
    <interactant intactId="EBI-2548012">
        <id>Q9H2G9</id>
    </interactant>
    <interactant intactId="EBI-739832">
        <id>Q8TBB1</id>
        <label>LNX1</label>
    </interactant>
    <organismsDiffer>false</organismsDiffer>
    <experiments>3</experiments>
</comment>
<comment type="interaction">
    <interactant intactId="EBI-2548012">
        <id>Q9H2G9</id>
    </interactant>
    <interactant intactId="EBI-1048159">
        <id>P55081</id>
        <label>MFAP1</label>
    </interactant>
    <organismsDiffer>false</organismsDiffer>
    <experiments>3</experiments>
</comment>
<comment type="interaction">
    <interactant intactId="EBI-2548012">
        <id>Q9H2G9</id>
    </interactant>
    <interactant intactId="EBI-10172526">
        <id>Q9UJV3-2</id>
        <label>MID2</label>
    </interactant>
    <organismsDiffer>false</organismsDiffer>
    <experiments>5</experiments>
</comment>
<comment type="interaction">
    <interactant intactId="EBI-2548012">
        <id>Q9H2G9</id>
    </interactant>
    <interactant intactId="EBI-2555085">
        <id>Q8IVT2</id>
        <label>MISP</label>
    </interactant>
    <organismsDiffer>false</organismsDiffer>
    <experiments>5</experiments>
</comment>
<comment type="interaction">
    <interactant intactId="EBI-2548012">
        <id>Q9H2G9</id>
    </interactant>
    <interactant intactId="EBI-2340269">
        <id>Q13064</id>
        <label>MKRN3</label>
    </interactant>
    <organismsDiffer>false</organismsDiffer>
    <experiments>3</experiments>
</comment>
<comment type="interaction">
    <interactant intactId="EBI-2548012">
        <id>Q9H2G9</id>
    </interactant>
    <interactant intactId="EBI-9675802">
        <id>Q6PF18</id>
        <label>MORN3</label>
    </interactant>
    <organismsDiffer>false</organismsDiffer>
    <experiments>3</experiments>
</comment>
<comment type="interaction">
    <interactant intactId="EBI-2548012">
        <id>Q9H2G9</id>
    </interactant>
    <interactant intactId="EBI-928842">
        <id>Q9GZM8</id>
        <label>NDEL1</label>
    </interactant>
    <organismsDiffer>false</organismsDiffer>
    <experiments>3</experiments>
</comment>
<comment type="interaction">
    <interactant intactId="EBI-2548012">
        <id>Q9H2G9</id>
    </interactant>
    <interactant intactId="EBI-741158">
        <id>Q96HA8</id>
        <label>NTAQ1</label>
    </interactant>
    <organismsDiffer>false</organismsDiffer>
    <experiments>3</experiments>
</comment>
<comment type="interaction">
    <interactant intactId="EBI-2548012">
        <id>Q9H2G9</id>
    </interactant>
    <interactant intactId="EBI-10281601">
        <id>Q9UMX2</id>
        <label>OAZ3</label>
    </interactant>
    <organismsDiffer>false</organismsDiffer>
    <experiments>4</experiments>
</comment>
<comment type="interaction">
    <interactant intactId="EBI-2548012">
        <id>Q9H2G9</id>
    </interactant>
    <interactant intactId="EBI-12012016">
        <id>Q9Y5F1</id>
        <label>PCDHB12</label>
    </interactant>
    <organismsDiffer>false</organismsDiffer>
    <experiments>3</experiments>
</comment>
<comment type="interaction">
    <interactant intactId="EBI-2548012">
        <id>Q9H2G9</id>
    </interactant>
    <interactant intactId="EBI-79893">
        <id>Q92569</id>
        <label>PIK3R3</label>
    </interactant>
    <organismsDiffer>false</organismsDiffer>
    <experiments>5</experiments>
</comment>
<comment type="interaction">
    <interactant intactId="EBI-2548012">
        <id>Q9H2G9</id>
    </interactant>
    <interactant intactId="EBI-602382">
        <id>Q16512</id>
        <label>PKN1</label>
    </interactant>
    <organismsDiffer>false</organismsDiffer>
    <experiments>3</experiments>
</comment>
<comment type="interaction">
    <interactant intactId="EBI-2548012">
        <id>Q9H2G9</id>
    </interactant>
    <interactant intactId="EBI-1055079">
        <id>O15160</id>
        <label>POLR1C</label>
    </interactant>
    <organismsDiffer>false</organismsDiffer>
    <experiments>3</experiments>
</comment>
<comment type="interaction">
    <interactant intactId="EBI-2548012">
        <id>Q9H2G9</id>
    </interactant>
    <interactant intactId="EBI-1053424">
        <id>O43741</id>
        <label>PRKAB2</label>
    </interactant>
    <organismsDiffer>false</organismsDiffer>
    <experiments>9</experiments>
</comment>
<comment type="interaction">
    <interactant intactId="EBI-2548012">
        <id>Q9H2G9</id>
    </interactant>
    <interactant intactId="EBI-2798416">
        <id>Q99633</id>
        <label>PRPF18</label>
    </interactant>
    <organismsDiffer>false</organismsDiffer>
    <experiments>5</experiments>
</comment>
<comment type="interaction">
    <interactant intactId="EBI-2548012">
        <id>Q9H2G9</id>
    </interactant>
    <interactant intactId="EBI-359352">
        <id>P25786</id>
        <label>PSMA1</label>
    </interactant>
    <organismsDiffer>false</organismsDiffer>
    <experiments>3</experiments>
</comment>
<comment type="interaction">
    <interactant intactId="EBI-2548012">
        <id>Q9H2G9</id>
    </interactant>
    <interactant intactId="EBI-752037">
        <id>P61019</id>
        <label>RAB2A</label>
    </interactant>
    <organismsDiffer>false</organismsDiffer>
    <experiments>9</experiments>
</comment>
<comment type="interaction">
    <interactant intactId="EBI-2548012">
        <id>Q9H2G9</id>
    </interactant>
    <interactant intactId="EBI-5542466">
        <id>Q8WUD1</id>
        <label>RAB2B</label>
    </interactant>
    <organismsDiffer>false</organismsDiffer>
    <experiments>10</experiments>
</comment>
<comment type="interaction">
    <interactant intactId="EBI-2548012">
        <id>Q9H2G9</id>
    </interactant>
    <interactant intactId="EBI-3048577">
        <id>Q14964</id>
        <label>RAB39A</label>
    </interactant>
    <organismsDiffer>false</organismsDiffer>
    <experiments>8</experiments>
</comment>
<comment type="interaction">
    <interactant intactId="EBI-2548012">
        <id>Q9H2G9</id>
    </interactant>
    <interactant intactId="EBI-712376">
        <id>P40937</id>
        <label>RFC5</label>
    </interactant>
    <organismsDiffer>false</organismsDiffer>
    <experiments>3</experiments>
</comment>
<comment type="interaction">
    <interactant intactId="EBI-2548012">
        <id>Q9H2G9</id>
    </interactant>
    <interactant intactId="EBI-6285694">
        <id>Q9H4E5</id>
        <label>RHOJ</label>
    </interactant>
    <organismsDiffer>false</organismsDiffer>
    <experiments>3</experiments>
</comment>
<comment type="interaction">
    <interactant intactId="EBI-2548012">
        <id>Q9H2G9</id>
    </interactant>
    <interactant intactId="EBI-748391">
        <id>Q9BWG6</id>
        <label>SCNM1</label>
    </interactant>
    <organismsDiffer>false</organismsDiffer>
    <experiments>6</experiments>
</comment>
<comment type="interaction">
    <interactant intactId="EBI-2548012">
        <id>Q9H2G9</id>
    </interactant>
    <interactant intactId="EBI-347161">
        <id>P84022</id>
        <label>SMAD3</label>
    </interactant>
    <organismsDiffer>false</organismsDiffer>
    <experiments>9</experiments>
</comment>
<comment type="interaction">
    <interactant intactId="EBI-2548012">
        <id>Q9H2G9</id>
    </interactant>
    <interactant intactId="EBI-5235340">
        <id>Q7Z699</id>
        <label>SPRED1</label>
    </interactant>
    <organismsDiffer>false</organismsDiffer>
    <experiments>3</experiments>
</comment>
<comment type="interaction">
    <interactant intactId="EBI-2548012">
        <id>Q9H2G9</id>
    </interactant>
    <interactant intactId="EBI-2210673">
        <id>Q16385</id>
        <label>SSX2B</label>
    </interactant>
    <organismsDiffer>false</organismsDiffer>
    <experiments>3</experiments>
</comment>
<comment type="interaction">
    <interactant intactId="EBI-2548012">
        <id>Q9H2G9</id>
    </interactant>
    <interactant intactId="EBI-745392">
        <id>Q9BSW7</id>
        <label>SYT17</label>
    </interactant>
    <organismsDiffer>false</organismsDiffer>
    <experiments>3</experiments>
</comment>
<comment type="interaction">
    <interactant intactId="EBI-2548012">
        <id>Q9H2G9</id>
    </interactant>
    <interactant intactId="EBI-8787464">
        <id>Q9NU19</id>
        <label>TBC1D22B</label>
    </interactant>
    <organismsDiffer>false</organismsDiffer>
    <experiments>3</experiments>
</comment>
<comment type="interaction">
    <interactant intactId="EBI-2548012">
        <id>Q9H2G9</id>
    </interactant>
    <interactant intactId="EBI-3258000">
        <id>Q9P0N9</id>
        <label>TBC1D7</label>
    </interactant>
    <organismsDiffer>false</organismsDiffer>
    <experiments>8</experiments>
</comment>
<comment type="interaction">
    <interactant intactId="EBI-2548012">
        <id>Q9H2G9</id>
    </interactant>
    <interactant intactId="EBI-954089">
        <id>O15273</id>
        <label>TCAP</label>
    </interactant>
    <organismsDiffer>false</organismsDiffer>
    <experiments>3</experiments>
</comment>
<comment type="interaction">
    <interactant intactId="EBI-2548012">
        <id>Q9H2G9</id>
    </interactant>
    <interactant intactId="EBI-7413767">
        <id>Q9Y242</id>
        <label>TCF19</label>
    </interactant>
    <organismsDiffer>false</organismsDiffer>
    <experiments>7</experiments>
</comment>
<comment type="interaction">
    <interactant intactId="EBI-2548012">
        <id>Q9H2G9</id>
    </interactant>
    <interactant intactId="EBI-750487">
        <id>Q8WW24</id>
        <label>TEKT4</label>
    </interactant>
    <organismsDiffer>false</organismsDiffer>
    <experiments>3</experiments>
</comment>
<comment type="interaction">
    <interactant intactId="EBI-2548012">
        <id>Q9H2G9</id>
    </interactant>
    <interactant intactId="EBI-949753">
        <id>Q63HR2</id>
        <label>TNS2</label>
    </interactant>
    <organismsDiffer>false</organismsDiffer>
    <experiments>3</experiments>
</comment>
<comment type="interaction">
    <interactant intactId="EBI-2548012">
        <id>Q9H2G9</id>
    </interactant>
    <interactant intactId="EBI-747601">
        <id>Q9UL33</id>
        <label>TRAPPC2L</label>
    </interactant>
    <organismsDiffer>false</organismsDiffer>
    <experiments>3</experiments>
</comment>
<comment type="interaction">
    <interactant intactId="EBI-2548012">
        <id>Q9H2G9</id>
    </interactant>
    <interactant intactId="EBI-11119202">
        <id>Q9UL33-2</id>
        <label>TRAPPC2L</label>
    </interactant>
    <organismsDiffer>false</organismsDiffer>
    <experiments>3</experiments>
</comment>
<comment type="interaction">
    <interactant intactId="EBI-2548012">
        <id>Q9H2G9</id>
    </interactant>
    <interactant intactId="EBI-10262539">
        <id>Q8IWR1</id>
        <label>TRIM59</label>
    </interactant>
    <organismsDiffer>false</organismsDiffer>
    <experiments>3</experiments>
</comment>
<comment type="interaction">
    <interactant intactId="EBI-2548012">
        <id>Q9H2G9</id>
    </interactant>
    <interactant intactId="EBI-10261521">
        <id>Q8IV54</id>
        <label>TSC22D4</label>
    </interactant>
    <organismsDiffer>false</organismsDiffer>
    <experiments>3</experiments>
</comment>
<comment type="interaction">
    <interactant intactId="EBI-2548012">
        <id>Q9H2G9</id>
    </interactant>
    <interactant intactId="EBI-8994397">
        <id>Q5T7W7</id>
        <label>TSTD2</label>
    </interactant>
    <organismsDiffer>false</organismsDiffer>
    <experiments>5</experiments>
</comment>
<comment type="interaction">
    <interactant intactId="EBI-2548012">
        <id>Q9H2G9</id>
    </interactant>
    <interactant intactId="EBI-9090990">
        <id>Q5W5X9-3</id>
        <label>TTC23</label>
    </interactant>
    <organismsDiffer>false</organismsDiffer>
    <experiments>5</experiments>
</comment>
<comment type="interaction">
    <interactant intactId="EBI-2548012">
        <id>Q9H2G9</id>
    </interactant>
    <interactant intactId="EBI-2825190">
        <id>Q86UY0</id>
        <label>TXNDC5</label>
    </interactant>
    <organismsDiffer>false</organismsDiffer>
    <experiments>3</experiments>
</comment>
<comment type="interaction">
    <interactant intactId="EBI-2548012">
        <id>Q9H2G9</id>
    </interactant>
    <interactant intactId="EBI-741480">
        <id>Q9UMX0</id>
        <label>UBQLN1</label>
    </interactant>
    <organismsDiffer>false</organismsDiffer>
    <experiments>3</experiments>
</comment>
<comment type="interaction">
    <interactant intactId="EBI-2548012">
        <id>Q9H2G9</id>
    </interactant>
    <interactant intactId="EBI-739895">
        <id>Q8N6Y0</id>
        <label>USHBP1</label>
    </interactant>
    <organismsDiffer>false</organismsDiffer>
    <experiments>3</experiments>
</comment>
<comment type="interaction">
    <interactant intactId="EBI-2548012">
        <id>Q9H2G9</id>
    </interactant>
    <interactant intactId="EBI-10243107">
        <id>Q548N1</id>
        <label>VPS28</label>
    </interactant>
    <organismsDiffer>false</organismsDiffer>
    <experiments>3</experiments>
</comment>
<comment type="interaction">
    <interactant intactId="EBI-2548012">
        <id>Q9H2G9</id>
    </interactant>
    <interactant intactId="EBI-727424">
        <id>Q9UK41</id>
        <label>VPS28</label>
    </interactant>
    <organismsDiffer>false</organismsDiffer>
    <experiments>3</experiments>
</comment>
<comment type="interaction">
    <interactant intactId="EBI-2548012">
        <id>Q9H2G9</id>
    </interactant>
    <interactant intactId="EBI-711925">
        <id>Q05516</id>
        <label>ZBTB16</label>
    </interactant>
    <organismsDiffer>false</organismsDiffer>
    <experiments>3</experiments>
</comment>
<comment type="interaction">
    <interactant intactId="EBI-2548012">
        <id>Q9H2G9</id>
    </interactant>
    <interactant intactId="EBI-744471">
        <id>O43167</id>
        <label>ZBTB24</label>
    </interactant>
    <organismsDiffer>false</organismsDiffer>
    <experiments>9</experiments>
</comment>
<comment type="interaction">
    <interactant intactId="EBI-2548012">
        <id>Q9H2G9</id>
    </interactant>
    <interactant intactId="EBI-16428984">
        <id>A0A0S2Z6H0</id>
        <label>ZGPAT</label>
    </interactant>
    <organismsDiffer>false</organismsDiffer>
    <experiments>3</experiments>
</comment>
<comment type="interaction">
    <interactant intactId="EBI-2548012">
        <id>Q9H2G9</id>
    </interactant>
    <interactant intactId="EBI-3439227">
        <id>Q8N5A5</id>
        <label>ZGPAT</label>
    </interactant>
    <organismsDiffer>false</organismsDiffer>
    <experiments>3</experiments>
</comment>
<comment type="interaction">
    <interactant intactId="EBI-2548012">
        <id>Q9H2G9</id>
    </interactant>
    <interactant intactId="EBI-10183064">
        <id>Q8N5A5-2</id>
        <label>ZGPAT</label>
    </interactant>
    <organismsDiffer>false</organismsDiffer>
    <experiments>6</experiments>
</comment>
<comment type="interaction">
    <interactant intactId="EBI-2548012">
        <id>Q9H2G9</id>
    </interactant>
    <interactant intactId="EBI-11963196">
        <id>Q15915</id>
        <label>ZIC1</label>
    </interactant>
    <organismsDiffer>false</organismsDiffer>
    <experiments>3</experiments>
</comment>
<comment type="interaction">
    <interactant intactId="EBI-2548012">
        <id>Q9H2G9</id>
    </interactant>
    <interactant intactId="EBI-11962760">
        <id>Q9NZV7</id>
        <label>ZIM2</label>
    </interactant>
    <organismsDiffer>false</organismsDiffer>
    <experiments>3</experiments>
</comment>
<comment type="interaction">
    <interactant intactId="EBI-2548012">
        <id>Q9H2G9</id>
    </interactant>
    <interactant intactId="EBI-2555767">
        <id>Q15973</id>
        <label>ZNF124</label>
    </interactant>
    <organismsDiffer>false</organismsDiffer>
    <experiments>3</experiments>
</comment>
<comment type="interaction">
    <interactant intactId="EBI-2548012">
        <id>Q9H2G9</id>
    </interactant>
    <interactant intactId="EBI-720304">
        <id>Q86VK4</id>
        <label>ZNF410</label>
    </interactant>
    <organismsDiffer>false</organismsDiffer>
    <experiments>4</experiments>
</comment>
<comment type="interaction">
    <interactant intactId="EBI-2548012">
        <id>Q9H2G9</id>
    </interactant>
    <interactant intactId="EBI-11741890">
        <id>Q86VK4-3</id>
        <label>ZNF410</label>
    </interactant>
    <organismsDiffer>false</organismsDiffer>
    <experiments>7</experiments>
</comment>
<comment type="interaction">
    <interactant intactId="EBI-2548012">
        <id>Q9H2G9</id>
    </interactant>
    <interactant intactId="EBI-740727">
        <id>Q8TAU3</id>
        <label>ZNF417</label>
    </interactant>
    <organismsDiffer>false</organismsDiffer>
    <experiments>3</experiments>
</comment>
<comment type="interaction">
    <interactant intactId="EBI-2548012">
        <id>Q9H2G9</id>
    </interactant>
    <interactant intactId="EBI-16429014">
        <id>A0A0S2Z5X4</id>
        <label>ZNF688</label>
    </interactant>
    <organismsDiffer>false</organismsDiffer>
    <experiments>3</experiments>
</comment>
<comment type="interaction">
    <interactant intactId="EBI-2548012">
        <id>Q9H2G9</id>
    </interactant>
    <interactant intactId="EBI-7254550">
        <id>P36508</id>
        <label>ZNF76</label>
    </interactant>
    <organismsDiffer>false</organismsDiffer>
    <experiments>3</experiments>
</comment>
<comment type="interaction">
    <interactant intactId="EBI-2548012">
        <id>Q9H2G9</id>
    </interactant>
    <interactant intactId="EBI-10211777">
        <id>A0A384ME25</id>
    </interactant>
    <organismsDiffer>false</organismsDiffer>
    <experiments>3</experiments>
</comment>
<comment type="interaction">
    <interactant intactId="EBI-2548012">
        <id>Q9H2G9</id>
    </interactant>
    <interactant intactId="EBI-25900580">
        <id>Q9Y649</id>
    </interactant>
    <organismsDiffer>false</organismsDiffer>
    <experiments>3</experiments>
</comment>
<comment type="subcellular location">
    <subcellularLocation>
        <location evidence="4">Golgi apparatus membrane</location>
    </subcellularLocation>
</comment>
<comment type="subcellular location">
    <molecule>Isoform 1</molecule>
    <subcellularLocation>
        <location evidence="3 6">Nucleus</location>
    </subcellularLocation>
    <text evidence="3 6">Detected in the nucleus upon heterologous expression. Not detected in the cytoplasm.</text>
</comment>
<comment type="subcellular location">
    <molecule>Isoform 2</molecule>
    <subcellularLocation>
        <location evidence="3">Cytoplasm</location>
    </subcellularLocation>
    <text evidence="3">Not detected in the nucleus.</text>
</comment>
<comment type="alternative products">
    <event type="alternative splicing"/>
    <isoform>
        <id>Q9H2G9-1</id>
        <name>1</name>
        <sequence type="displayed"/>
    </isoform>
    <isoform>
        <id>Q9H2G9-2</id>
        <name>2</name>
        <name>JEM1s</name>
        <sequence type="described" ref="VSP_011186 VSP_011187"/>
    </isoform>
</comment>
<comment type="tissue specificity">
    <text evidence="3 4 6">Detected in adrenal gland (PubMed:9129147).</text>
</comment>
<comment type="induction">
    <text evidence="3 6">Up-regulated by retinoids.</text>
</comment>
<comment type="domain">
    <text evidence="5">The tankyrase-binding motif (also named TBD) is required for interaction with tankyrase TNKS and TNKS2.</text>
</comment>
<comment type="PTM">
    <text evidence="5">ADP-ribosylated by tankyrase TNKS and TNKS2. Poly-ADP-ribosylated protein is recognized by RNF146, followed by ubiquitination.</text>
</comment>
<comment type="PTM">
    <text evidence="5">Ubiquitinated by RNF146 when poly-ADP-ribosylated, leading to its degradation.</text>
</comment>
<comment type="caution">
    <text evidence="10 11 12">Was originally identified as a potential transcription factor, because of the presence of a potential basic motif and leucine-zipper domain, and because isoform 1 is detected in the nucleus upon heterologous expression. However, homology at several typical position for basic or hydrophobic residues is missing. Besides, another publication showed it is important for normal Golgi apparatus structure and function.</text>
</comment>
<accession>Q9H2G9</accession>
<accession>O15298</accession>
<accession>Q5T531</accession>
<accession>Q5T533</accession>
<accession>Q9GZX4</accession>
<reference key="1">
    <citation type="journal article" date="1997" name="Oncogene">
        <title>JEM-1, a novel gene encoding a leucine-zipper nuclear factor upregulated during retinoid-induced maturation of NB4 promyelocytic leukaemia.</title>
        <authorList>
            <person name="Duprez E."/>
            <person name="Tong J.-H."/>
            <person name="Derre J."/>
            <person name="Chen S.-J."/>
            <person name="Berger R."/>
            <person name="Chen Z."/>
            <person name="Lanotte M."/>
        </authorList>
    </citation>
    <scope>NUCLEOTIDE SEQUENCE [MRNA] (ISOFORM 1)</scope>
    <scope>SUBCELLULAR LOCATION</scope>
    <scope>TISSUE SPECIFICITY</scope>
    <scope>INDUCTION</scope>
</reference>
<reference key="2">
    <citation type="journal article" date="2000" name="Genomics">
        <title>Genomic organization of the JEM-1 (BLZF1) gene on human chromosome 1q24: molecular cloning and analysis of its promoter region.</title>
        <authorList>
            <person name="Tong J.-H."/>
            <person name="Fant X."/>
            <person name="Benoit G."/>
            <person name="Chen S.-J."/>
            <person name="Chen Z."/>
            <person name="Lanotte M."/>
        </authorList>
    </citation>
    <scope>NUCLEOTIDE SEQUENCE [GENOMIC DNA / MRNA] (ISOFORMS 1 AND 2)</scope>
    <scope>SUBCELLULAR LOCATION</scope>
    <scope>TISSUE SPECIFICITY</scope>
    <scope>INDUCTION</scope>
</reference>
<reference key="3">
    <citation type="journal article" date="2001" name="J. Cell Biol.">
        <title>A GRASP55-rab2 effector complex linking Golgi structure to membrane traffic.</title>
        <authorList>
            <person name="Short B."/>
            <person name="Preisinger C."/>
            <person name="Koerner R."/>
            <person name="Kopajtich R."/>
            <person name="Byron O."/>
            <person name="Barr F.A."/>
        </authorList>
    </citation>
    <scope>NUCLEOTIDE SEQUENCE [MRNA]</scope>
    <scope>FUNCTION</scope>
    <scope>INTERACTION WITH GORASP2 AND THE GTP FORM OF RAB2</scope>
    <scope>SUBCELLULAR LOCATION</scope>
    <scope>TISSUE SPECIFICITY</scope>
    <scope>IDENTIFICATION BY MASS SPECTROMETRY</scope>
    <source>
        <tissue>Testis</tissue>
    </source>
</reference>
<reference key="4">
    <citation type="journal article" date="2006" name="Nature">
        <title>The DNA sequence and biological annotation of human chromosome 1.</title>
        <authorList>
            <person name="Gregory S.G."/>
            <person name="Barlow K.F."/>
            <person name="McLay K.E."/>
            <person name="Kaul R."/>
            <person name="Swarbreck D."/>
            <person name="Dunham A."/>
            <person name="Scott C.E."/>
            <person name="Howe K.L."/>
            <person name="Woodfine K."/>
            <person name="Spencer C.C.A."/>
            <person name="Jones M.C."/>
            <person name="Gillson C."/>
            <person name="Searle S."/>
            <person name="Zhou Y."/>
            <person name="Kokocinski F."/>
            <person name="McDonald L."/>
            <person name="Evans R."/>
            <person name="Phillips K."/>
            <person name="Atkinson A."/>
            <person name="Cooper R."/>
            <person name="Jones C."/>
            <person name="Hall R.E."/>
            <person name="Andrews T.D."/>
            <person name="Lloyd C."/>
            <person name="Ainscough R."/>
            <person name="Almeida J.P."/>
            <person name="Ambrose K.D."/>
            <person name="Anderson F."/>
            <person name="Andrew R.W."/>
            <person name="Ashwell R.I.S."/>
            <person name="Aubin K."/>
            <person name="Babbage A.K."/>
            <person name="Bagguley C.L."/>
            <person name="Bailey J."/>
            <person name="Beasley H."/>
            <person name="Bethel G."/>
            <person name="Bird C.P."/>
            <person name="Bray-Allen S."/>
            <person name="Brown J.Y."/>
            <person name="Brown A.J."/>
            <person name="Buckley D."/>
            <person name="Burton J."/>
            <person name="Bye J."/>
            <person name="Carder C."/>
            <person name="Chapman J.C."/>
            <person name="Clark S.Y."/>
            <person name="Clarke G."/>
            <person name="Clee C."/>
            <person name="Cobley V."/>
            <person name="Collier R.E."/>
            <person name="Corby N."/>
            <person name="Coville G.J."/>
            <person name="Davies J."/>
            <person name="Deadman R."/>
            <person name="Dunn M."/>
            <person name="Earthrowl M."/>
            <person name="Ellington A.G."/>
            <person name="Errington H."/>
            <person name="Frankish A."/>
            <person name="Frankland J."/>
            <person name="French L."/>
            <person name="Garner P."/>
            <person name="Garnett J."/>
            <person name="Gay L."/>
            <person name="Ghori M.R.J."/>
            <person name="Gibson R."/>
            <person name="Gilby L.M."/>
            <person name="Gillett W."/>
            <person name="Glithero R.J."/>
            <person name="Grafham D.V."/>
            <person name="Griffiths C."/>
            <person name="Griffiths-Jones S."/>
            <person name="Grocock R."/>
            <person name="Hammond S."/>
            <person name="Harrison E.S.I."/>
            <person name="Hart E."/>
            <person name="Haugen E."/>
            <person name="Heath P.D."/>
            <person name="Holmes S."/>
            <person name="Holt K."/>
            <person name="Howden P.J."/>
            <person name="Hunt A.R."/>
            <person name="Hunt S.E."/>
            <person name="Hunter G."/>
            <person name="Isherwood J."/>
            <person name="James R."/>
            <person name="Johnson C."/>
            <person name="Johnson D."/>
            <person name="Joy A."/>
            <person name="Kay M."/>
            <person name="Kershaw J.K."/>
            <person name="Kibukawa M."/>
            <person name="Kimberley A.M."/>
            <person name="King A."/>
            <person name="Knights A.J."/>
            <person name="Lad H."/>
            <person name="Laird G."/>
            <person name="Lawlor S."/>
            <person name="Leongamornlert D.A."/>
            <person name="Lloyd D.M."/>
            <person name="Loveland J."/>
            <person name="Lovell J."/>
            <person name="Lush M.J."/>
            <person name="Lyne R."/>
            <person name="Martin S."/>
            <person name="Mashreghi-Mohammadi M."/>
            <person name="Matthews L."/>
            <person name="Matthews N.S.W."/>
            <person name="McLaren S."/>
            <person name="Milne S."/>
            <person name="Mistry S."/>
            <person name="Moore M.J.F."/>
            <person name="Nickerson T."/>
            <person name="O'Dell C.N."/>
            <person name="Oliver K."/>
            <person name="Palmeiri A."/>
            <person name="Palmer S.A."/>
            <person name="Parker A."/>
            <person name="Patel D."/>
            <person name="Pearce A.V."/>
            <person name="Peck A.I."/>
            <person name="Pelan S."/>
            <person name="Phelps K."/>
            <person name="Phillimore B.J."/>
            <person name="Plumb R."/>
            <person name="Rajan J."/>
            <person name="Raymond C."/>
            <person name="Rouse G."/>
            <person name="Saenphimmachak C."/>
            <person name="Sehra H.K."/>
            <person name="Sheridan E."/>
            <person name="Shownkeen R."/>
            <person name="Sims S."/>
            <person name="Skuce C.D."/>
            <person name="Smith M."/>
            <person name="Steward C."/>
            <person name="Subramanian S."/>
            <person name="Sycamore N."/>
            <person name="Tracey A."/>
            <person name="Tromans A."/>
            <person name="Van Helmond Z."/>
            <person name="Wall M."/>
            <person name="Wallis J.M."/>
            <person name="White S."/>
            <person name="Whitehead S.L."/>
            <person name="Wilkinson J.E."/>
            <person name="Willey D.L."/>
            <person name="Williams H."/>
            <person name="Wilming L."/>
            <person name="Wray P.W."/>
            <person name="Wu Z."/>
            <person name="Coulson A."/>
            <person name="Vaudin M."/>
            <person name="Sulston J.E."/>
            <person name="Durbin R.M."/>
            <person name="Hubbard T."/>
            <person name="Wooster R."/>
            <person name="Dunham I."/>
            <person name="Carter N.P."/>
            <person name="McVean G."/>
            <person name="Ross M.T."/>
            <person name="Harrow J."/>
            <person name="Olson M.V."/>
            <person name="Beck S."/>
            <person name="Rogers J."/>
            <person name="Bentley D.R."/>
        </authorList>
    </citation>
    <scope>NUCLEOTIDE SEQUENCE [LARGE SCALE GENOMIC DNA]</scope>
</reference>
<reference key="5">
    <citation type="submission" date="2005-07" db="EMBL/GenBank/DDBJ databases">
        <authorList>
            <person name="Mural R.J."/>
            <person name="Istrail S."/>
            <person name="Sutton G.G."/>
            <person name="Florea L."/>
            <person name="Halpern A.L."/>
            <person name="Mobarry C.M."/>
            <person name="Lippert R."/>
            <person name="Walenz B."/>
            <person name="Shatkay H."/>
            <person name="Dew I."/>
            <person name="Miller J.R."/>
            <person name="Flanigan M.J."/>
            <person name="Edwards N.J."/>
            <person name="Bolanos R."/>
            <person name="Fasulo D."/>
            <person name="Halldorsson B.V."/>
            <person name="Hannenhalli S."/>
            <person name="Turner R."/>
            <person name="Yooseph S."/>
            <person name="Lu F."/>
            <person name="Nusskern D.R."/>
            <person name="Shue B.C."/>
            <person name="Zheng X.H."/>
            <person name="Zhong F."/>
            <person name="Delcher A.L."/>
            <person name="Huson D.H."/>
            <person name="Kravitz S.A."/>
            <person name="Mouchard L."/>
            <person name="Reinert K."/>
            <person name="Remington K.A."/>
            <person name="Clark A.G."/>
            <person name="Waterman M.S."/>
            <person name="Eichler E.E."/>
            <person name="Adams M.D."/>
            <person name="Hunkapiller M.W."/>
            <person name="Myers E.W."/>
            <person name="Venter J.C."/>
        </authorList>
    </citation>
    <scope>NUCLEOTIDE SEQUENCE [LARGE SCALE GENOMIC DNA]</scope>
</reference>
<reference key="6">
    <citation type="journal article" date="2004" name="Genome Res.">
        <title>The status, quality, and expansion of the NIH full-length cDNA project: the Mammalian Gene Collection (MGC).</title>
        <authorList>
            <consortium name="The MGC Project Team"/>
        </authorList>
    </citation>
    <scope>NUCLEOTIDE SEQUENCE [LARGE SCALE MRNA] (ISOFORM 1)</scope>
    <source>
        <tissue>Liver</tissue>
    </source>
</reference>
<reference key="7">
    <citation type="journal article" date="2008" name="Proc. Natl. Acad. Sci. U.S.A.">
        <title>A quantitative atlas of mitotic phosphorylation.</title>
        <authorList>
            <person name="Dephoure N."/>
            <person name="Zhou C."/>
            <person name="Villen J."/>
            <person name="Beausoleil S.A."/>
            <person name="Bakalarski C.E."/>
            <person name="Elledge S.J."/>
            <person name="Gygi S.P."/>
        </authorList>
    </citation>
    <scope>PHOSPHORYLATION [LARGE SCALE ANALYSIS] AT THR-348 AND SER-353</scope>
    <scope>IDENTIFICATION BY MASS SPECTROMETRY [LARGE SCALE ANALYSIS]</scope>
    <source>
        <tissue>Cervix carcinoma</tissue>
    </source>
</reference>
<reference key="8">
    <citation type="journal article" date="2010" name="Sci. Signal.">
        <title>Quantitative phosphoproteomics reveals widespread full phosphorylation site occupancy during mitosis.</title>
        <authorList>
            <person name="Olsen J.V."/>
            <person name="Vermeulen M."/>
            <person name="Santamaria A."/>
            <person name="Kumar C."/>
            <person name="Miller M.L."/>
            <person name="Jensen L.J."/>
            <person name="Gnad F."/>
            <person name="Cox J."/>
            <person name="Jensen T.S."/>
            <person name="Nigg E.A."/>
            <person name="Brunak S."/>
            <person name="Mann M."/>
        </authorList>
    </citation>
    <scope>PHOSPHORYLATION [LARGE SCALE ANALYSIS] AT SER-49</scope>
    <scope>IDENTIFICATION BY MASS SPECTROMETRY [LARGE SCALE ANALYSIS]</scope>
    <source>
        <tissue>Cervix carcinoma</tissue>
    </source>
</reference>
<reference key="9">
    <citation type="journal article" date="2011" name="Nat. Cell Biol.">
        <title>RNF146 is a poly(ADP-ribose)-directed E3 ligase that regulates axin degradation and Wnt signalling.</title>
        <authorList>
            <person name="Zhang Y."/>
            <person name="Liu S."/>
            <person name="Mickanin C."/>
            <person name="Feng Y."/>
            <person name="Charlat O."/>
            <person name="Michaud G.A."/>
            <person name="Schirle M."/>
            <person name="Shi X."/>
            <person name="Hild M."/>
            <person name="Bauer A."/>
            <person name="Myer V.E."/>
            <person name="Finan P.M."/>
            <person name="Porter J.A."/>
            <person name="Huang S.M."/>
            <person name="Cong F."/>
        </authorList>
    </citation>
    <scope>ADP-RIBOSYLATION</scope>
    <scope>UBIQUITINATION</scope>
    <scope>DOMAIN TANKYRASE-BINDING MOTIF</scope>
</reference>
<reference key="10">
    <citation type="journal article" date="2013" name="J. Proteome Res.">
        <title>Toward a comprehensive characterization of a human cancer cell phosphoproteome.</title>
        <authorList>
            <person name="Zhou H."/>
            <person name="Di Palma S."/>
            <person name="Preisinger C."/>
            <person name="Peng M."/>
            <person name="Polat A.N."/>
            <person name="Heck A.J."/>
            <person name="Mohammed S."/>
        </authorList>
    </citation>
    <scope>PHOSPHORYLATION [LARGE SCALE ANALYSIS] AT SER-15</scope>
    <scope>IDENTIFICATION BY MASS SPECTROMETRY [LARGE SCALE ANALYSIS]</scope>
    <source>
        <tissue>Cervix carcinoma</tissue>
        <tissue>Erythroleukemia</tissue>
    </source>
</reference>
<name>GO45_HUMAN</name>
<keyword id="KW-0013">ADP-ribosylation</keyword>
<keyword id="KW-0025">Alternative splicing</keyword>
<keyword id="KW-0175">Coiled coil</keyword>
<keyword id="KW-0963">Cytoplasm</keyword>
<keyword id="KW-0931">ER-Golgi transport</keyword>
<keyword id="KW-0333">Golgi apparatus</keyword>
<keyword id="KW-0472">Membrane</keyword>
<keyword id="KW-0539">Nucleus</keyword>
<keyword id="KW-0597">Phosphoprotein</keyword>
<keyword id="KW-0653">Protein transport</keyword>
<keyword id="KW-1267">Proteomics identification</keyword>
<keyword id="KW-1185">Reference proteome</keyword>
<keyword id="KW-0813">Transport</keyword>
<keyword id="KW-0832">Ubl conjugation</keyword>
<organism>
    <name type="scientific">Homo sapiens</name>
    <name type="common">Human</name>
    <dbReference type="NCBI Taxonomy" id="9606"/>
    <lineage>
        <taxon>Eukaryota</taxon>
        <taxon>Metazoa</taxon>
        <taxon>Chordata</taxon>
        <taxon>Craniata</taxon>
        <taxon>Vertebrata</taxon>
        <taxon>Euteleostomi</taxon>
        <taxon>Mammalia</taxon>
        <taxon>Eutheria</taxon>
        <taxon>Euarchontoglires</taxon>
        <taxon>Primates</taxon>
        <taxon>Haplorrhini</taxon>
        <taxon>Catarrhini</taxon>
        <taxon>Hominidae</taxon>
        <taxon>Homo</taxon>
    </lineage>
</organism>